<keyword id="KW-0963">Cytoplasm</keyword>
<keyword id="KW-0488">Methylation</keyword>
<keyword id="KW-0648">Protein biosynthesis</keyword>
<feature type="chain" id="PRO_1000093558" description="Peptide chain release factor 2">
    <location>
        <begin position="1"/>
        <end position="374"/>
    </location>
</feature>
<feature type="modified residue" description="N5-methylglutamine" evidence="1">
    <location>
        <position position="252"/>
    </location>
</feature>
<accession>B4SHV0</accession>
<protein>
    <recommendedName>
        <fullName evidence="1">Peptide chain release factor 2</fullName>
        <shortName evidence="1">RF-2</shortName>
    </recommendedName>
</protein>
<dbReference type="EMBL" id="CP001111">
    <property type="protein sequence ID" value="ACF51527.1"/>
    <property type="molecule type" value="Genomic_DNA"/>
</dbReference>
<dbReference type="SMR" id="B4SHV0"/>
<dbReference type="STRING" id="391008.Smal_1823"/>
<dbReference type="KEGG" id="smt:Smal_1823"/>
<dbReference type="eggNOG" id="COG1186">
    <property type="taxonomic scope" value="Bacteria"/>
</dbReference>
<dbReference type="HOGENOM" id="CLU_220733_1_0_6"/>
<dbReference type="OrthoDB" id="9806673at2"/>
<dbReference type="Proteomes" id="UP000001867">
    <property type="component" value="Chromosome"/>
</dbReference>
<dbReference type="GO" id="GO:0005737">
    <property type="term" value="C:cytoplasm"/>
    <property type="evidence" value="ECO:0007669"/>
    <property type="project" value="UniProtKB-SubCell"/>
</dbReference>
<dbReference type="GO" id="GO:0016149">
    <property type="term" value="F:translation release factor activity, codon specific"/>
    <property type="evidence" value="ECO:0007669"/>
    <property type="project" value="UniProtKB-UniRule"/>
</dbReference>
<dbReference type="FunFam" id="3.30.160.20:FF:000010">
    <property type="entry name" value="Peptide chain release factor 2"/>
    <property type="match status" value="1"/>
</dbReference>
<dbReference type="Gene3D" id="3.30.160.20">
    <property type="match status" value="1"/>
</dbReference>
<dbReference type="Gene3D" id="3.30.70.1660">
    <property type="match status" value="1"/>
</dbReference>
<dbReference type="Gene3D" id="1.20.58.410">
    <property type="entry name" value="Release factor"/>
    <property type="match status" value="1"/>
</dbReference>
<dbReference type="HAMAP" id="MF_00094">
    <property type="entry name" value="Rel_fac_2"/>
    <property type="match status" value="1"/>
</dbReference>
<dbReference type="InterPro" id="IPR005139">
    <property type="entry name" value="PCRF"/>
</dbReference>
<dbReference type="InterPro" id="IPR000352">
    <property type="entry name" value="Pep_chain_release_fac_I"/>
</dbReference>
<dbReference type="InterPro" id="IPR045853">
    <property type="entry name" value="Pep_chain_release_fac_I_sf"/>
</dbReference>
<dbReference type="InterPro" id="IPR004374">
    <property type="entry name" value="PrfB"/>
</dbReference>
<dbReference type="NCBIfam" id="TIGR00020">
    <property type="entry name" value="prfB"/>
    <property type="match status" value="1"/>
</dbReference>
<dbReference type="PANTHER" id="PTHR43116:SF3">
    <property type="entry name" value="CLASS I PEPTIDE CHAIN RELEASE FACTOR"/>
    <property type="match status" value="1"/>
</dbReference>
<dbReference type="PANTHER" id="PTHR43116">
    <property type="entry name" value="PEPTIDE CHAIN RELEASE FACTOR 2"/>
    <property type="match status" value="1"/>
</dbReference>
<dbReference type="Pfam" id="PF03462">
    <property type="entry name" value="PCRF"/>
    <property type="match status" value="1"/>
</dbReference>
<dbReference type="Pfam" id="PF00472">
    <property type="entry name" value="RF-1"/>
    <property type="match status" value="1"/>
</dbReference>
<dbReference type="SMART" id="SM00937">
    <property type="entry name" value="PCRF"/>
    <property type="match status" value="1"/>
</dbReference>
<dbReference type="SUPFAM" id="SSF75620">
    <property type="entry name" value="Release factor"/>
    <property type="match status" value="1"/>
</dbReference>
<dbReference type="PROSITE" id="PS00745">
    <property type="entry name" value="RF_PROK_I"/>
    <property type="match status" value="1"/>
</dbReference>
<evidence type="ECO:0000255" key="1">
    <source>
        <dbReference type="HAMAP-Rule" id="MF_00094"/>
    </source>
</evidence>
<reference key="1">
    <citation type="submission" date="2008-06" db="EMBL/GenBank/DDBJ databases">
        <title>Complete sequence of Stenotrophomonas maltophilia R551-3.</title>
        <authorList>
            <consortium name="US DOE Joint Genome Institute"/>
            <person name="Lucas S."/>
            <person name="Copeland A."/>
            <person name="Lapidus A."/>
            <person name="Glavina del Rio T."/>
            <person name="Dalin E."/>
            <person name="Tice H."/>
            <person name="Pitluck S."/>
            <person name="Chain P."/>
            <person name="Malfatti S."/>
            <person name="Shin M."/>
            <person name="Vergez L."/>
            <person name="Lang D."/>
            <person name="Schmutz J."/>
            <person name="Larimer F."/>
            <person name="Land M."/>
            <person name="Hauser L."/>
            <person name="Kyrpides N."/>
            <person name="Mikhailova N."/>
            <person name="Taghavi S."/>
            <person name="Monchy S."/>
            <person name="Newman L."/>
            <person name="Vangronsveld J."/>
            <person name="van der Lelie D."/>
            <person name="Richardson P."/>
        </authorList>
    </citation>
    <scope>NUCLEOTIDE SEQUENCE [LARGE SCALE GENOMIC DNA]</scope>
    <source>
        <strain>R551-3</strain>
    </source>
</reference>
<organism>
    <name type="scientific">Stenotrophomonas maltophilia (strain R551-3)</name>
    <dbReference type="NCBI Taxonomy" id="391008"/>
    <lineage>
        <taxon>Bacteria</taxon>
        <taxon>Pseudomonadati</taxon>
        <taxon>Pseudomonadota</taxon>
        <taxon>Gammaproteobacteria</taxon>
        <taxon>Lysobacterales</taxon>
        <taxon>Lysobacteraceae</taxon>
        <taxon>Stenotrophomonas</taxon>
        <taxon>Stenotrophomonas maltophilia group</taxon>
    </lineage>
</organism>
<proteinExistence type="inferred from homology"/>
<sequence>MIELNPVRQRITDLTDRVLSLRGYLDYDAKKERLEEVTRELESPDVWNNAEYAQNLGRERSSLEKTVGGIASVLDGLADATELLELAESEQDEDTALAVVADLDKHQAHVEKLEFQRMFSGEMDNAAAFVDIQAGAGGTEAQDWAEILLRMYLRWCESRGWKTELMEVSGGDVAGIKSATLRVEGDYAYGWLKTETGVHRLVRKSPFDSDNRRHTSFTSVFVSPEIDDNIDITINPADLRTDVYRSSGAGGQHVNKTESAVRITHIPTNIVVACQTGRSQHQNRDNAMKMLAAKLYELEIQKRNAEKDAVEATKSDIGWGSQIRNYVLDQSRIKDLRTGIERSDTQKVLDGDLDEFVEASLKAGLAVGSKRVDA</sequence>
<gene>
    <name evidence="1" type="primary">prfB</name>
    <name type="ordered locus">Smal_1823</name>
</gene>
<name>RF2_STRM5</name>
<comment type="function">
    <text evidence="1">Peptide chain release factor 2 directs the termination of translation in response to the peptide chain termination codons UGA and UAA.</text>
</comment>
<comment type="subcellular location">
    <subcellularLocation>
        <location evidence="1">Cytoplasm</location>
    </subcellularLocation>
</comment>
<comment type="PTM">
    <text evidence="1">Methylated by PrmC. Methylation increases the termination efficiency of RF2.</text>
</comment>
<comment type="similarity">
    <text evidence="1">Belongs to the prokaryotic/mitochondrial release factor family.</text>
</comment>